<reference key="1">
    <citation type="journal article" date="2001" name="Science">
        <title>The genome of the natural genetic engineer Agrobacterium tumefaciens C58.</title>
        <authorList>
            <person name="Wood D.W."/>
            <person name="Setubal J.C."/>
            <person name="Kaul R."/>
            <person name="Monks D.E."/>
            <person name="Kitajima J.P."/>
            <person name="Okura V.K."/>
            <person name="Zhou Y."/>
            <person name="Chen L."/>
            <person name="Wood G.E."/>
            <person name="Almeida N.F. Jr."/>
            <person name="Woo L."/>
            <person name="Chen Y."/>
            <person name="Paulsen I.T."/>
            <person name="Eisen J.A."/>
            <person name="Karp P.D."/>
            <person name="Bovee D. Sr."/>
            <person name="Chapman P."/>
            <person name="Clendenning J."/>
            <person name="Deatherage G."/>
            <person name="Gillet W."/>
            <person name="Grant C."/>
            <person name="Kutyavin T."/>
            <person name="Levy R."/>
            <person name="Li M.-J."/>
            <person name="McClelland E."/>
            <person name="Palmieri A."/>
            <person name="Raymond C."/>
            <person name="Rouse G."/>
            <person name="Saenphimmachak C."/>
            <person name="Wu Z."/>
            <person name="Romero P."/>
            <person name="Gordon D."/>
            <person name="Zhang S."/>
            <person name="Yoo H."/>
            <person name="Tao Y."/>
            <person name="Biddle P."/>
            <person name="Jung M."/>
            <person name="Krespan W."/>
            <person name="Perry M."/>
            <person name="Gordon-Kamm B."/>
            <person name="Liao L."/>
            <person name="Kim S."/>
            <person name="Hendrick C."/>
            <person name="Zhao Z.-Y."/>
            <person name="Dolan M."/>
            <person name="Chumley F."/>
            <person name="Tingey S.V."/>
            <person name="Tomb J.-F."/>
            <person name="Gordon M.P."/>
            <person name="Olson M.V."/>
            <person name="Nester E.W."/>
        </authorList>
    </citation>
    <scope>NUCLEOTIDE SEQUENCE [LARGE SCALE GENOMIC DNA]</scope>
    <source>
        <strain>C58 / ATCC 33970</strain>
    </source>
</reference>
<reference key="2">
    <citation type="journal article" date="2001" name="Science">
        <title>Genome sequence of the plant pathogen and biotechnology agent Agrobacterium tumefaciens C58.</title>
        <authorList>
            <person name="Goodner B."/>
            <person name="Hinkle G."/>
            <person name="Gattung S."/>
            <person name="Miller N."/>
            <person name="Blanchard M."/>
            <person name="Qurollo B."/>
            <person name="Goldman B.S."/>
            <person name="Cao Y."/>
            <person name="Askenazi M."/>
            <person name="Halling C."/>
            <person name="Mullin L."/>
            <person name="Houmiel K."/>
            <person name="Gordon J."/>
            <person name="Vaudin M."/>
            <person name="Iartchouk O."/>
            <person name="Epp A."/>
            <person name="Liu F."/>
            <person name="Wollam C."/>
            <person name="Allinger M."/>
            <person name="Doughty D."/>
            <person name="Scott C."/>
            <person name="Lappas C."/>
            <person name="Markelz B."/>
            <person name="Flanagan C."/>
            <person name="Crowell C."/>
            <person name="Gurson J."/>
            <person name="Lomo C."/>
            <person name="Sear C."/>
            <person name="Strub G."/>
            <person name="Cielo C."/>
            <person name="Slater S."/>
        </authorList>
    </citation>
    <scope>NUCLEOTIDE SEQUENCE [LARGE SCALE GENOMIC DNA]</scope>
    <source>
        <strain>C58 / ATCC 33970</strain>
    </source>
</reference>
<accession>Q8UE35</accession>
<accession>Q8U569</accession>
<keyword id="KW-1185">Reference proteome</keyword>
<keyword id="KW-0687">Ribonucleoprotein</keyword>
<keyword id="KW-0689">Ribosomal protein</keyword>
<keyword id="KW-0694">RNA-binding</keyword>
<keyword id="KW-0699">rRNA-binding</keyword>
<comment type="function">
    <text evidence="1">With S4 and S12 plays an important role in translational accuracy.</text>
</comment>
<comment type="function">
    <text evidence="1">Located at the back of the 30S subunit body where it stabilizes the conformation of the head with respect to the body.</text>
</comment>
<comment type="subunit">
    <text evidence="1">Part of the 30S ribosomal subunit. Contacts proteins S4 and S8.</text>
</comment>
<comment type="domain">
    <text>The N-terminal domain interacts with the head of the 30S subunit; the C-terminal domain interacts with the body and contacts protein S4. The interaction surface between S4 and S5 is involved in control of translational fidelity.</text>
</comment>
<comment type="similarity">
    <text evidence="1">Belongs to the universal ribosomal protein uS5 family.</text>
</comment>
<organism>
    <name type="scientific">Agrobacterium fabrum (strain C58 / ATCC 33970)</name>
    <name type="common">Agrobacterium tumefaciens (strain C58)</name>
    <dbReference type="NCBI Taxonomy" id="176299"/>
    <lineage>
        <taxon>Bacteria</taxon>
        <taxon>Pseudomonadati</taxon>
        <taxon>Pseudomonadota</taxon>
        <taxon>Alphaproteobacteria</taxon>
        <taxon>Hyphomicrobiales</taxon>
        <taxon>Rhizobiaceae</taxon>
        <taxon>Rhizobium/Agrobacterium group</taxon>
        <taxon>Agrobacterium</taxon>
        <taxon>Agrobacterium tumefaciens complex</taxon>
    </lineage>
</organism>
<feature type="chain" id="PRO_0000131456" description="Small ribosomal subunit protein uS5">
    <location>
        <begin position="1"/>
        <end position="189"/>
    </location>
</feature>
<feature type="domain" description="S5 DRBM" evidence="1">
    <location>
        <begin position="22"/>
        <end position="85"/>
    </location>
</feature>
<gene>
    <name evidence="1" type="primary">rpsE</name>
    <name type="ordered locus">Atu1929</name>
    <name type="ORF">AGR_C_3528</name>
</gene>
<dbReference type="EMBL" id="AE007869">
    <property type="protein sequence ID" value="AAK87692.2"/>
    <property type="molecule type" value="Genomic_DNA"/>
</dbReference>
<dbReference type="PIR" id="AG2813">
    <property type="entry name" value="AG2813"/>
</dbReference>
<dbReference type="PIR" id="C97592">
    <property type="entry name" value="C97592"/>
</dbReference>
<dbReference type="RefSeq" id="NP_354907.2">
    <property type="nucleotide sequence ID" value="NC_003062.2"/>
</dbReference>
<dbReference type="RefSeq" id="WP_003495208.1">
    <property type="nucleotide sequence ID" value="NC_003062.2"/>
</dbReference>
<dbReference type="SMR" id="Q8UE35"/>
<dbReference type="STRING" id="176299.Atu1929"/>
<dbReference type="EnsemblBacteria" id="AAK87692">
    <property type="protein sequence ID" value="AAK87692"/>
    <property type="gene ID" value="Atu1929"/>
</dbReference>
<dbReference type="GeneID" id="97364676"/>
<dbReference type="KEGG" id="atu:Atu1929"/>
<dbReference type="PATRIC" id="fig|176299.10.peg.1941"/>
<dbReference type="eggNOG" id="COG0098">
    <property type="taxonomic scope" value="Bacteria"/>
</dbReference>
<dbReference type="HOGENOM" id="CLU_065898_2_2_5"/>
<dbReference type="OrthoDB" id="9809045at2"/>
<dbReference type="PhylomeDB" id="Q8UE35"/>
<dbReference type="BioCyc" id="AGRO:ATU1929-MONOMER"/>
<dbReference type="PRO" id="PR:Q8UE35"/>
<dbReference type="Proteomes" id="UP000000813">
    <property type="component" value="Chromosome circular"/>
</dbReference>
<dbReference type="GO" id="GO:0015935">
    <property type="term" value="C:small ribosomal subunit"/>
    <property type="evidence" value="ECO:0007669"/>
    <property type="project" value="InterPro"/>
</dbReference>
<dbReference type="GO" id="GO:0019843">
    <property type="term" value="F:rRNA binding"/>
    <property type="evidence" value="ECO:0007669"/>
    <property type="project" value="UniProtKB-UniRule"/>
</dbReference>
<dbReference type="GO" id="GO:0003735">
    <property type="term" value="F:structural constituent of ribosome"/>
    <property type="evidence" value="ECO:0007669"/>
    <property type="project" value="InterPro"/>
</dbReference>
<dbReference type="GO" id="GO:0006412">
    <property type="term" value="P:translation"/>
    <property type="evidence" value="ECO:0007669"/>
    <property type="project" value="UniProtKB-UniRule"/>
</dbReference>
<dbReference type="FunFam" id="3.30.160.20:FF:000001">
    <property type="entry name" value="30S ribosomal protein S5"/>
    <property type="match status" value="1"/>
</dbReference>
<dbReference type="FunFam" id="3.30.230.10:FF:000002">
    <property type="entry name" value="30S ribosomal protein S5"/>
    <property type="match status" value="1"/>
</dbReference>
<dbReference type="Gene3D" id="3.30.160.20">
    <property type="match status" value="1"/>
</dbReference>
<dbReference type="Gene3D" id="3.30.230.10">
    <property type="match status" value="1"/>
</dbReference>
<dbReference type="HAMAP" id="MF_01307_B">
    <property type="entry name" value="Ribosomal_uS5_B"/>
    <property type="match status" value="1"/>
</dbReference>
<dbReference type="InterPro" id="IPR020568">
    <property type="entry name" value="Ribosomal_Su5_D2-typ_SF"/>
</dbReference>
<dbReference type="InterPro" id="IPR000851">
    <property type="entry name" value="Ribosomal_uS5"/>
</dbReference>
<dbReference type="InterPro" id="IPR005712">
    <property type="entry name" value="Ribosomal_uS5_bac-type"/>
</dbReference>
<dbReference type="InterPro" id="IPR005324">
    <property type="entry name" value="Ribosomal_uS5_C"/>
</dbReference>
<dbReference type="InterPro" id="IPR013810">
    <property type="entry name" value="Ribosomal_uS5_N"/>
</dbReference>
<dbReference type="InterPro" id="IPR018192">
    <property type="entry name" value="Ribosomal_uS5_N_CS"/>
</dbReference>
<dbReference type="InterPro" id="IPR014721">
    <property type="entry name" value="Ribsml_uS5_D2-typ_fold_subgr"/>
</dbReference>
<dbReference type="NCBIfam" id="TIGR01021">
    <property type="entry name" value="rpsE_bact"/>
    <property type="match status" value="1"/>
</dbReference>
<dbReference type="PANTHER" id="PTHR48277">
    <property type="entry name" value="MITOCHONDRIAL RIBOSOMAL PROTEIN S5"/>
    <property type="match status" value="1"/>
</dbReference>
<dbReference type="PANTHER" id="PTHR48277:SF1">
    <property type="entry name" value="MITOCHONDRIAL RIBOSOMAL PROTEIN S5"/>
    <property type="match status" value="1"/>
</dbReference>
<dbReference type="Pfam" id="PF00333">
    <property type="entry name" value="Ribosomal_S5"/>
    <property type="match status" value="1"/>
</dbReference>
<dbReference type="Pfam" id="PF03719">
    <property type="entry name" value="Ribosomal_S5_C"/>
    <property type="match status" value="1"/>
</dbReference>
<dbReference type="SUPFAM" id="SSF54768">
    <property type="entry name" value="dsRNA-binding domain-like"/>
    <property type="match status" value="1"/>
</dbReference>
<dbReference type="SUPFAM" id="SSF54211">
    <property type="entry name" value="Ribosomal protein S5 domain 2-like"/>
    <property type="match status" value="1"/>
</dbReference>
<dbReference type="PROSITE" id="PS00585">
    <property type="entry name" value="RIBOSOMAL_S5"/>
    <property type="match status" value="1"/>
</dbReference>
<dbReference type="PROSITE" id="PS50881">
    <property type="entry name" value="S5_DSRBD"/>
    <property type="match status" value="1"/>
</dbReference>
<proteinExistence type="inferred from homology"/>
<protein>
    <recommendedName>
        <fullName evidence="1">Small ribosomal subunit protein uS5</fullName>
    </recommendedName>
    <alternativeName>
        <fullName evidence="2">30S ribosomal protein S5</fullName>
    </alternativeName>
</protein>
<sequence>MAQEKRGSRDDRQNREERDSEFVDKLVAINRVAKVVKGGRRFGFAALVVVGDQKGRVGFGHGKAREVPEAIRKATESAKRDLIFVPLRDGRTLHHDVNGRHGAGKVLLRSAKAGTGIIAGGPMRAVFETLGVHDVVAKSTGSSNPYNMVRATFDALKHQVHPKDIAAQRGLKYATLQARRAASGNASEE</sequence>
<name>RS5_AGRFC</name>
<evidence type="ECO:0000255" key="1">
    <source>
        <dbReference type="HAMAP-Rule" id="MF_01307"/>
    </source>
</evidence>
<evidence type="ECO:0000305" key="2"/>